<dbReference type="EC" id="2.4.2.43"/>
<dbReference type="EMBL" id="AF036677">
    <property type="protein sequence ID" value="AAC04774.1"/>
    <property type="status" value="ALT_INIT"/>
    <property type="molecule type" value="Genomic_DNA"/>
</dbReference>
<dbReference type="EMBL" id="AY057444">
    <property type="protein sequence ID" value="AAL34393.1"/>
    <property type="status" value="ALT_INIT"/>
    <property type="molecule type" value="Genomic_DNA"/>
</dbReference>
<dbReference type="EMBL" id="AE006468">
    <property type="protein sequence ID" value="AAL21202.1"/>
    <property type="status" value="ALT_INIT"/>
    <property type="molecule type" value="Genomic_DNA"/>
</dbReference>
<dbReference type="SMR" id="O52327"/>
<dbReference type="STRING" id="99287.STM2301"/>
<dbReference type="ChEMBL" id="CHEMBL1075254"/>
<dbReference type="CAZy" id="GT83">
    <property type="family name" value="Glycosyltransferase Family 83"/>
</dbReference>
<dbReference type="PaxDb" id="99287-STM2301"/>
<dbReference type="KEGG" id="stm:STM2301"/>
<dbReference type="PATRIC" id="fig|99287.12.peg.2436"/>
<dbReference type="HOGENOM" id="CLU_019200_2_1_6"/>
<dbReference type="OMA" id="KGPLILM"/>
<dbReference type="PhylomeDB" id="O52327"/>
<dbReference type="BRENDA" id="2.4.2.43">
    <property type="organism ID" value="5542"/>
</dbReference>
<dbReference type="UniPathway" id="UPA00037"/>
<dbReference type="Proteomes" id="UP000001014">
    <property type="component" value="Chromosome"/>
</dbReference>
<dbReference type="GO" id="GO:0005886">
    <property type="term" value="C:plasma membrane"/>
    <property type="evidence" value="ECO:0000318"/>
    <property type="project" value="GO_Central"/>
</dbReference>
<dbReference type="GO" id="GO:0103015">
    <property type="term" value="F:4-amino-4-deoxy-L-arabinose transferase activity"/>
    <property type="evidence" value="ECO:0007669"/>
    <property type="project" value="UniProtKB-EC"/>
</dbReference>
<dbReference type="GO" id="GO:0000030">
    <property type="term" value="F:mannosyltransferase activity"/>
    <property type="evidence" value="ECO:0007669"/>
    <property type="project" value="InterPro"/>
</dbReference>
<dbReference type="GO" id="GO:0016763">
    <property type="term" value="F:pentosyltransferase activity"/>
    <property type="evidence" value="ECO:0000318"/>
    <property type="project" value="GO_Central"/>
</dbReference>
<dbReference type="GO" id="GO:0009245">
    <property type="term" value="P:lipid A biosynthetic process"/>
    <property type="evidence" value="ECO:0007669"/>
    <property type="project" value="UniProtKB-UniRule"/>
</dbReference>
<dbReference type="GO" id="GO:0009103">
    <property type="term" value="P:lipopolysaccharide biosynthetic process"/>
    <property type="evidence" value="ECO:0000318"/>
    <property type="project" value="GO_Central"/>
</dbReference>
<dbReference type="GO" id="GO:0006493">
    <property type="term" value="P:protein O-linked glycosylation"/>
    <property type="evidence" value="ECO:0007669"/>
    <property type="project" value="InterPro"/>
</dbReference>
<dbReference type="GO" id="GO:0010041">
    <property type="term" value="P:response to iron(III) ion"/>
    <property type="evidence" value="ECO:0000318"/>
    <property type="project" value="GO_Central"/>
</dbReference>
<dbReference type="HAMAP" id="MF_01165">
    <property type="entry name" value="ArnT_transfer"/>
    <property type="match status" value="1"/>
</dbReference>
<dbReference type="InterPro" id="IPR022839">
    <property type="entry name" value="ArnT_tfrase"/>
</dbReference>
<dbReference type="InterPro" id="IPR003342">
    <property type="entry name" value="Glyco_trans_39/83"/>
</dbReference>
<dbReference type="InterPro" id="IPR050297">
    <property type="entry name" value="LipidA_mod_glycosyltrf_83"/>
</dbReference>
<dbReference type="NCBIfam" id="NF009784">
    <property type="entry name" value="PRK13279.1"/>
    <property type="match status" value="1"/>
</dbReference>
<dbReference type="PANTHER" id="PTHR33908">
    <property type="entry name" value="MANNOSYLTRANSFERASE YKCB-RELATED"/>
    <property type="match status" value="1"/>
</dbReference>
<dbReference type="PANTHER" id="PTHR33908:SF3">
    <property type="entry name" value="UNDECAPRENYL PHOSPHATE-ALPHA-4-AMINO-4-DEOXY-L-ARABINOSE ARABINOSYL TRANSFERASE"/>
    <property type="match status" value="1"/>
</dbReference>
<dbReference type="Pfam" id="PF02366">
    <property type="entry name" value="PMT"/>
    <property type="match status" value="1"/>
</dbReference>
<protein>
    <recommendedName>
        <fullName>Undecaprenyl phosphate-alpha-4-amino-4-deoxy-L-arabinose arabinosyl transferase</fullName>
        <ecNumber>2.4.2.43</ecNumber>
    </recommendedName>
    <alternativeName>
        <fullName>4-amino-4-deoxy-L-arabinose lipid A transferase</fullName>
    </alternativeName>
    <alternativeName>
        <fullName>Lipid IV(A) 4-amino-4-deoxy-L-arabinosyltransferase</fullName>
    </alternativeName>
    <alternativeName>
        <fullName>Polymyxin resistance protein PmrK</fullName>
    </alternativeName>
    <alternativeName>
        <fullName>Undecaprenyl phosphate-alpha-L-Ara4N transferase</fullName>
    </alternativeName>
</protein>
<name>ARNT_SALTY</name>
<keyword id="KW-0997">Cell inner membrane</keyword>
<keyword id="KW-1003">Cell membrane</keyword>
<keyword id="KW-0328">Glycosyltransferase</keyword>
<keyword id="KW-0441">Lipid A biosynthesis</keyword>
<keyword id="KW-0444">Lipid biosynthesis</keyword>
<keyword id="KW-0443">Lipid metabolism</keyword>
<keyword id="KW-0448">Lipopolysaccharide biosynthesis</keyword>
<keyword id="KW-0472">Membrane</keyword>
<keyword id="KW-1185">Reference proteome</keyword>
<keyword id="KW-0808">Transferase</keyword>
<keyword id="KW-0812">Transmembrane</keyword>
<keyword id="KW-1133">Transmembrane helix</keyword>
<organism>
    <name type="scientific">Salmonella typhimurium (strain LT2 / SGSC1412 / ATCC 700720)</name>
    <dbReference type="NCBI Taxonomy" id="99287"/>
    <lineage>
        <taxon>Bacteria</taxon>
        <taxon>Pseudomonadati</taxon>
        <taxon>Pseudomonadota</taxon>
        <taxon>Gammaproteobacteria</taxon>
        <taxon>Enterobacterales</taxon>
        <taxon>Enterobacteriaceae</taxon>
        <taxon>Salmonella</taxon>
    </lineage>
</organism>
<proteinExistence type="evidence at protein level"/>
<comment type="function">
    <text evidence="3 4">Catalyzes the transfer of the L-Ara4N moiety of the glycolipid undecaprenyl phosphate-alpha-L-Ara4N to lipid A. The modified arabinose is attached to lipid A and is required for resistance to polymyxin and cationic antimicrobial peptides.</text>
</comment>
<comment type="catalytic activity">
    <reaction evidence="3">
        <text>4-amino-4-deoxy-alpha-L-arabinopyranosyl di-trans,octa-cis-undecaprenyl phosphate + lipid IVA = lipid IIA + di-trans,octa-cis-undecaprenyl phosphate.</text>
        <dbReference type="EC" id="2.4.2.43"/>
    </reaction>
</comment>
<comment type="biophysicochemical properties">
    <phDependence>
        <text evidence="3">Optimum pH is 6.5.</text>
    </phDependence>
</comment>
<comment type="pathway">
    <text>Lipopolysaccharide metabolism; 4-amino-4-deoxy-beta-L-arabinose-lipid A biosynthesis.</text>
</comment>
<comment type="subcellular location">
    <subcellularLocation>
        <location evidence="4">Cell inner membrane</location>
        <topology evidence="4">Multi-pass membrane protein</topology>
    </subcellularLocation>
</comment>
<comment type="induction">
    <text evidence="2">Induced by BasR.</text>
</comment>
<comment type="similarity">
    <text evidence="5">Belongs to the glycosyltransferase 83 family.</text>
</comment>
<comment type="sequence caution" evidence="5">
    <conflict type="erroneous initiation">
        <sequence resource="EMBL-CDS" id="AAC04774"/>
    </conflict>
</comment>
<comment type="sequence caution" evidence="5">
    <conflict type="erroneous initiation">
        <sequence resource="EMBL-CDS" id="AAL21202"/>
    </conflict>
</comment>
<comment type="sequence caution" evidence="5">
    <conflict type="erroneous initiation">
        <sequence resource="EMBL-CDS" id="AAL34393"/>
    </conflict>
</comment>
<evidence type="ECO:0000255" key="1"/>
<evidence type="ECO:0000269" key="2">
    <source>
    </source>
</evidence>
<evidence type="ECO:0000269" key="3">
    <source>
    </source>
</evidence>
<evidence type="ECO:0000269" key="4">
    <source>
    </source>
</evidence>
<evidence type="ECO:0000305" key="5"/>
<gene>
    <name type="primary">arnT</name>
    <name type="synonym">pmrK</name>
    <name type="ordered locus">STM2301</name>
</gene>
<sequence>MKSIRYYLAFAAFIALYYVIPVNSRLLWQPDETRYAEISREMLASGDWIVPHFLGLRYFEKPIAGYWINSLGQWLFGATNFGVRAGAILTTLLAAALVAWLTFRLWRDKRTALLASVIFLSLFAVYSIGTYAVLDPMIALWLTAGMCCFWQGMQATTRMGKIGMFLLLGATCGLGVLTKGFLALAVPVVSVLPWVIVQKRWKDFLLYGWLAVLSCFVVVLPWAIAIARREADFWHYFFWVEHIQRFAMSDAQHKAPFWYYLPVLLAGSLPWLGLLPGALKLGWRERNGAFYLLGWTIMPLLFFSIAKGKLPTYVLSCFAPIAILMARFVLHNVKEGVAALRVNGGINLVFGLVGIVAAFVVSSWGPLKSPVWTHIETYKVFCVWGVFTVWAFVGWYSLCHSQKYLLPAFCPLGLALLFGFSIPDRVMESKQPQFFVEMTQAPLASSRYILADNVGVAAGLAWSLKRDDIMLYGHAGELRYGLSYPDVQDKFVKADDFNAWLNQHRQEGIITLVLSIAKDEDISALSLPPADNIDYQGRLVLIQYRPK</sequence>
<feature type="chain" id="PRO_0000121512" description="Undecaprenyl phosphate-alpha-4-amino-4-deoxy-L-arabinose arabinosyl transferase">
    <location>
        <begin position="1"/>
        <end position="547"/>
    </location>
</feature>
<feature type="transmembrane region" description="Helical" evidence="1">
    <location>
        <begin position="8"/>
        <end position="28"/>
    </location>
</feature>
<feature type="transmembrane region" description="Helical" evidence="1">
    <location>
        <begin position="81"/>
        <end position="101"/>
    </location>
</feature>
<feature type="transmembrane region" description="Helical" evidence="1">
    <location>
        <begin position="113"/>
        <end position="133"/>
    </location>
</feature>
<feature type="transmembrane region" description="Helical" evidence="1">
    <location>
        <begin position="136"/>
        <end position="156"/>
    </location>
</feature>
<feature type="transmembrane region" description="Helical" evidence="1">
    <location>
        <begin position="162"/>
        <end position="184"/>
    </location>
</feature>
<feature type="transmembrane region" description="Helical" evidence="1">
    <location>
        <begin position="204"/>
        <end position="224"/>
    </location>
</feature>
<feature type="transmembrane region" description="Helical" evidence="1">
    <location>
        <begin position="255"/>
        <end position="275"/>
    </location>
</feature>
<feature type="transmembrane region" description="Helical" evidence="1">
    <location>
        <begin position="288"/>
        <end position="308"/>
    </location>
</feature>
<feature type="transmembrane region" description="Helical" evidence="1">
    <location>
        <begin position="310"/>
        <end position="330"/>
    </location>
</feature>
<feature type="transmembrane region" description="Helical" evidence="1">
    <location>
        <begin position="344"/>
        <end position="364"/>
    </location>
</feature>
<feature type="transmembrane region" description="Helical" evidence="1">
    <location>
        <begin position="380"/>
        <end position="400"/>
    </location>
</feature>
<feature type="transmembrane region" description="Helical" evidence="1">
    <location>
        <begin position="404"/>
        <end position="424"/>
    </location>
</feature>
<accession>O52327</accession>
<accession>Q7CQ57</accession>
<accession>Q8ZNF1</accession>
<reference key="1">
    <citation type="journal article" date="1998" name="Mol. Microbiol.">
        <title>PmrA-PmrB-regulated genes necessary for 4-aminoarabinose lipid A modification and polymyxin resistance.</title>
        <authorList>
            <person name="Gunn J.S."/>
            <person name="Lim K.B."/>
            <person name="Krueger J."/>
            <person name="Kim K."/>
            <person name="Guo L."/>
            <person name="Hackett M."/>
            <person name="Miller S.I."/>
        </authorList>
    </citation>
    <scope>NUCLEOTIDE SEQUENCE [GENOMIC DNA]</scope>
    <source>
        <strain>ATCC 14028s / SGSG 2262</strain>
    </source>
</reference>
<reference key="2">
    <citation type="journal article" date="2001" name="J. Biol. Chem.">
        <title>An inner membrane enzyme in Salmonella and Escherichia coli that transfers 4-amino-4-deoxy-L-arabinose to lipid A: induction on polymyxin-resistant mutants and role of a novel lipid-linked donor.</title>
        <authorList>
            <person name="Trent M.S."/>
            <person name="Ribeiro A.A."/>
            <person name="Lin S."/>
            <person name="Cotter R.J."/>
            <person name="Raetz C.R.H."/>
        </authorList>
    </citation>
    <scope>NUCLEOTIDE SEQUENCE [GENOMIC DNA]</scope>
    <scope>FUNCTION</scope>
    <scope>CATALYTIC ACTIVITY</scope>
    <scope>BIOPHYSICOCHEMICAL PROPERTIES</scope>
    <source>
        <strain>ATCC 14028s / SGSG 2262</strain>
    </source>
</reference>
<reference key="3">
    <citation type="journal article" date="2001" name="Nature">
        <title>Complete genome sequence of Salmonella enterica serovar Typhimurium LT2.</title>
        <authorList>
            <person name="McClelland M."/>
            <person name="Sanderson K.E."/>
            <person name="Spieth J."/>
            <person name="Clifton S.W."/>
            <person name="Latreille P."/>
            <person name="Courtney L."/>
            <person name="Porwollik S."/>
            <person name="Ali J."/>
            <person name="Dante M."/>
            <person name="Du F."/>
            <person name="Hou S."/>
            <person name="Layman D."/>
            <person name="Leonard S."/>
            <person name="Nguyen C."/>
            <person name="Scott K."/>
            <person name="Holmes A."/>
            <person name="Grewal N."/>
            <person name="Mulvaney E."/>
            <person name="Ryan E."/>
            <person name="Sun H."/>
            <person name="Florea L."/>
            <person name="Miller W."/>
            <person name="Stoneking T."/>
            <person name="Nhan M."/>
            <person name="Waterston R."/>
            <person name="Wilson R.K."/>
        </authorList>
    </citation>
    <scope>NUCLEOTIDE SEQUENCE [LARGE SCALE GENOMIC DNA]</scope>
    <source>
        <strain>LT2 / SGSC1412 / ATCC 700720</strain>
    </source>
</reference>
<reference key="4">
    <citation type="journal article" date="1999" name="J. Biol. Chem.">
        <title>Molecular characterization of the PmrA regulon.</title>
        <authorList>
            <person name="Woesten M.M.S.M."/>
            <person name="Groisman E.A."/>
        </authorList>
    </citation>
    <scope>INDUCTION</scope>
    <source>
        <strain>ATCC 14028s / SGSG 2262</strain>
    </source>
</reference>
<reference key="5">
    <citation type="journal article" date="2000" name="Cell">
        <title>A signal transduction system that responds to extracellular iron.</title>
        <authorList>
            <person name="Woesten M.M.S.M."/>
            <person name="Kox L.F.F."/>
            <person name="Chamnongpol S."/>
            <person name="Soncini F.C."/>
            <person name="Groisman E.A."/>
        </authorList>
    </citation>
    <scope>REGULATION BY BASR AND BASS</scope>
</reference>
<reference key="6">
    <citation type="journal article" date="2006" name="Protein Expr. Purif.">
        <title>Purification and characterization of the L-Ara4N transferase protein ArnT from Salmonella typhimurium.</title>
        <authorList>
            <person name="Bretscher L.E."/>
            <person name="Morrell M.T."/>
            <person name="Funk A.L."/>
            <person name="Klug C.S."/>
        </authorList>
    </citation>
    <scope>FUNCTION</scope>
    <scope>SUBCELLULAR LOCATION</scope>
</reference>